<sequence length="347" mass="39163">MKNILDFTLEELKEWMKENGENAFRAKQIFDWIYKKEVFNFEEMKNISKALIGKLSENFYIGIPEVIDYLSSSEDGTRKILLGLGDGNIIECVIMKYKYGNSICVSTQIGCRMGCKFCASTLEGMVRNLTAGEILSEVLIGQKLLGERISNIVLMGSGEPLDNYDNVMKFLEIVNADYGLNIGQRHITLSTCGLVPKIREMADKEMQVTLAISLHAVSDEKRKTIMPIANKYSISEILDACNYYIEKTGRRITFEYSLVSGVNDTKEDAKSLGRLLKGMLCHVNLIPVNEIKENEFKKSTKKDIETFLNTLKTYGVEATVRREMGSDINAACGQLRRSYIKSKGLKL</sequence>
<accession>Q0SS81</accession>
<gene>
    <name evidence="1" type="primary">rlmN</name>
    <name type="ordered locus">CPR_1711</name>
</gene>
<organism>
    <name type="scientific">Clostridium perfringens (strain SM101 / Type A)</name>
    <dbReference type="NCBI Taxonomy" id="289380"/>
    <lineage>
        <taxon>Bacteria</taxon>
        <taxon>Bacillati</taxon>
        <taxon>Bacillota</taxon>
        <taxon>Clostridia</taxon>
        <taxon>Eubacteriales</taxon>
        <taxon>Clostridiaceae</taxon>
        <taxon>Clostridium</taxon>
    </lineage>
</organism>
<feature type="chain" id="PRO_0000350128" description="Probable dual-specificity RNA methyltransferase RlmN">
    <location>
        <begin position="1"/>
        <end position="347"/>
    </location>
</feature>
<feature type="domain" description="Radical SAM core" evidence="2">
    <location>
        <begin position="97"/>
        <end position="327"/>
    </location>
</feature>
<feature type="active site" description="Proton acceptor" evidence="1">
    <location>
        <position position="91"/>
    </location>
</feature>
<feature type="active site" description="S-methylcysteine intermediate" evidence="1">
    <location>
        <position position="332"/>
    </location>
</feature>
<feature type="binding site" evidence="1">
    <location>
        <position position="111"/>
    </location>
    <ligand>
        <name>[4Fe-4S] cluster</name>
        <dbReference type="ChEBI" id="CHEBI:49883"/>
        <note>4Fe-4S-S-AdoMet</note>
    </ligand>
</feature>
<feature type="binding site" evidence="1">
    <location>
        <position position="115"/>
    </location>
    <ligand>
        <name>[4Fe-4S] cluster</name>
        <dbReference type="ChEBI" id="CHEBI:49883"/>
        <note>4Fe-4S-S-AdoMet</note>
    </ligand>
</feature>
<feature type="binding site" evidence="1">
    <location>
        <position position="118"/>
    </location>
    <ligand>
        <name>[4Fe-4S] cluster</name>
        <dbReference type="ChEBI" id="CHEBI:49883"/>
        <note>4Fe-4S-S-AdoMet</note>
    </ligand>
</feature>
<feature type="binding site" evidence="1">
    <location>
        <begin position="158"/>
        <end position="159"/>
    </location>
    <ligand>
        <name>S-adenosyl-L-methionine</name>
        <dbReference type="ChEBI" id="CHEBI:59789"/>
    </ligand>
</feature>
<feature type="binding site" evidence="1">
    <location>
        <position position="190"/>
    </location>
    <ligand>
        <name>S-adenosyl-L-methionine</name>
        <dbReference type="ChEBI" id="CHEBI:59789"/>
    </ligand>
</feature>
<feature type="binding site" evidence="1">
    <location>
        <begin position="213"/>
        <end position="215"/>
    </location>
    <ligand>
        <name>S-adenosyl-L-methionine</name>
        <dbReference type="ChEBI" id="CHEBI:59789"/>
    </ligand>
</feature>
<feature type="binding site" evidence="1">
    <location>
        <position position="289"/>
    </location>
    <ligand>
        <name>S-adenosyl-L-methionine</name>
        <dbReference type="ChEBI" id="CHEBI:59789"/>
    </ligand>
</feature>
<feature type="disulfide bond" description="(transient)" evidence="1">
    <location>
        <begin position="104"/>
        <end position="332"/>
    </location>
</feature>
<name>RLMN_CLOPS</name>
<reference key="1">
    <citation type="journal article" date="2006" name="Genome Res.">
        <title>Skewed genomic variability in strains of the toxigenic bacterial pathogen, Clostridium perfringens.</title>
        <authorList>
            <person name="Myers G.S.A."/>
            <person name="Rasko D.A."/>
            <person name="Cheung J.K."/>
            <person name="Ravel J."/>
            <person name="Seshadri R."/>
            <person name="DeBoy R.T."/>
            <person name="Ren Q."/>
            <person name="Varga J."/>
            <person name="Awad M.M."/>
            <person name="Brinkac L.M."/>
            <person name="Daugherty S.C."/>
            <person name="Haft D.H."/>
            <person name="Dodson R.J."/>
            <person name="Madupu R."/>
            <person name="Nelson W.C."/>
            <person name="Rosovitz M.J."/>
            <person name="Sullivan S.A."/>
            <person name="Khouri H."/>
            <person name="Dimitrov G.I."/>
            <person name="Watkins K.L."/>
            <person name="Mulligan S."/>
            <person name="Benton J."/>
            <person name="Radune D."/>
            <person name="Fisher D.J."/>
            <person name="Atkins H.S."/>
            <person name="Hiscox T."/>
            <person name="Jost B.H."/>
            <person name="Billington S.J."/>
            <person name="Songer J.G."/>
            <person name="McClane B.A."/>
            <person name="Titball R.W."/>
            <person name="Rood J.I."/>
            <person name="Melville S.B."/>
            <person name="Paulsen I.T."/>
        </authorList>
    </citation>
    <scope>NUCLEOTIDE SEQUENCE [LARGE SCALE GENOMIC DNA]</scope>
    <source>
        <strain>SM101 / Type A</strain>
    </source>
</reference>
<proteinExistence type="inferred from homology"/>
<dbReference type="EC" id="2.1.1.192" evidence="1"/>
<dbReference type="EMBL" id="CP000312">
    <property type="protein sequence ID" value="ABG86779.1"/>
    <property type="molecule type" value="Genomic_DNA"/>
</dbReference>
<dbReference type="RefSeq" id="WP_011592628.1">
    <property type="nucleotide sequence ID" value="NC_008262.1"/>
</dbReference>
<dbReference type="SMR" id="Q0SS81"/>
<dbReference type="KEGG" id="cpr:CPR_1711"/>
<dbReference type="Proteomes" id="UP000001824">
    <property type="component" value="Chromosome"/>
</dbReference>
<dbReference type="GO" id="GO:0005737">
    <property type="term" value="C:cytoplasm"/>
    <property type="evidence" value="ECO:0007669"/>
    <property type="project" value="UniProtKB-SubCell"/>
</dbReference>
<dbReference type="GO" id="GO:0051539">
    <property type="term" value="F:4 iron, 4 sulfur cluster binding"/>
    <property type="evidence" value="ECO:0007669"/>
    <property type="project" value="UniProtKB-UniRule"/>
</dbReference>
<dbReference type="GO" id="GO:0046872">
    <property type="term" value="F:metal ion binding"/>
    <property type="evidence" value="ECO:0007669"/>
    <property type="project" value="UniProtKB-KW"/>
</dbReference>
<dbReference type="GO" id="GO:0070040">
    <property type="term" value="F:rRNA (adenine(2503)-C2-)-methyltransferase activity"/>
    <property type="evidence" value="ECO:0007669"/>
    <property type="project" value="UniProtKB-UniRule"/>
</dbReference>
<dbReference type="GO" id="GO:0019843">
    <property type="term" value="F:rRNA binding"/>
    <property type="evidence" value="ECO:0007669"/>
    <property type="project" value="UniProtKB-UniRule"/>
</dbReference>
<dbReference type="GO" id="GO:0002935">
    <property type="term" value="F:tRNA (adenine(37)-C2)-methyltransferase activity"/>
    <property type="evidence" value="ECO:0007669"/>
    <property type="project" value="UniProtKB-UniRule"/>
</dbReference>
<dbReference type="GO" id="GO:0000049">
    <property type="term" value="F:tRNA binding"/>
    <property type="evidence" value="ECO:0007669"/>
    <property type="project" value="UniProtKB-UniRule"/>
</dbReference>
<dbReference type="GO" id="GO:0070475">
    <property type="term" value="P:rRNA base methylation"/>
    <property type="evidence" value="ECO:0007669"/>
    <property type="project" value="UniProtKB-UniRule"/>
</dbReference>
<dbReference type="GO" id="GO:0030488">
    <property type="term" value="P:tRNA methylation"/>
    <property type="evidence" value="ECO:0007669"/>
    <property type="project" value="UniProtKB-UniRule"/>
</dbReference>
<dbReference type="CDD" id="cd01335">
    <property type="entry name" value="Radical_SAM"/>
    <property type="match status" value="1"/>
</dbReference>
<dbReference type="FunFam" id="3.20.20.70:FF:000014">
    <property type="entry name" value="Probable dual-specificity RNA methyltransferase RlmN"/>
    <property type="match status" value="1"/>
</dbReference>
<dbReference type="Gene3D" id="1.10.150.530">
    <property type="match status" value="1"/>
</dbReference>
<dbReference type="Gene3D" id="3.20.20.70">
    <property type="entry name" value="Aldolase class I"/>
    <property type="match status" value="1"/>
</dbReference>
<dbReference type="HAMAP" id="MF_01849">
    <property type="entry name" value="RNA_methyltr_RlmN"/>
    <property type="match status" value="1"/>
</dbReference>
<dbReference type="InterPro" id="IPR013785">
    <property type="entry name" value="Aldolase_TIM"/>
</dbReference>
<dbReference type="InterPro" id="IPR006638">
    <property type="entry name" value="Elp3/MiaA/NifB-like_rSAM"/>
</dbReference>
<dbReference type="InterPro" id="IPR040072">
    <property type="entry name" value="Methyltransferase_A"/>
</dbReference>
<dbReference type="InterPro" id="IPR048641">
    <property type="entry name" value="RlmN_N"/>
</dbReference>
<dbReference type="InterPro" id="IPR027492">
    <property type="entry name" value="RNA_MTrfase_RlmN"/>
</dbReference>
<dbReference type="InterPro" id="IPR004383">
    <property type="entry name" value="rRNA_lsu_MTrfase_RlmN/Cfr"/>
</dbReference>
<dbReference type="InterPro" id="IPR007197">
    <property type="entry name" value="rSAM"/>
</dbReference>
<dbReference type="NCBIfam" id="TIGR00048">
    <property type="entry name" value="rRNA_mod_RlmN"/>
    <property type="match status" value="1"/>
</dbReference>
<dbReference type="PANTHER" id="PTHR30544">
    <property type="entry name" value="23S RRNA METHYLTRANSFERASE"/>
    <property type="match status" value="1"/>
</dbReference>
<dbReference type="PANTHER" id="PTHR30544:SF5">
    <property type="entry name" value="RADICAL SAM CORE DOMAIN-CONTAINING PROTEIN"/>
    <property type="match status" value="1"/>
</dbReference>
<dbReference type="Pfam" id="PF04055">
    <property type="entry name" value="Radical_SAM"/>
    <property type="match status" value="1"/>
</dbReference>
<dbReference type="Pfam" id="PF21016">
    <property type="entry name" value="RlmN_N"/>
    <property type="match status" value="1"/>
</dbReference>
<dbReference type="PIRSF" id="PIRSF006004">
    <property type="entry name" value="CHP00048"/>
    <property type="match status" value="1"/>
</dbReference>
<dbReference type="SFLD" id="SFLDF00275">
    <property type="entry name" value="adenosine_C2_methyltransferase"/>
    <property type="match status" value="1"/>
</dbReference>
<dbReference type="SFLD" id="SFLDS00029">
    <property type="entry name" value="Radical_SAM"/>
    <property type="match status" value="1"/>
</dbReference>
<dbReference type="SMART" id="SM00729">
    <property type="entry name" value="Elp3"/>
    <property type="match status" value="1"/>
</dbReference>
<dbReference type="SUPFAM" id="SSF102114">
    <property type="entry name" value="Radical SAM enzymes"/>
    <property type="match status" value="1"/>
</dbReference>
<dbReference type="PROSITE" id="PS51918">
    <property type="entry name" value="RADICAL_SAM"/>
    <property type="match status" value="1"/>
</dbReference>
<evidence type="ECO:0000255" key="1">
    <source>
        <dbReference type="HAMAP-Rule" id="MF_01849"/>
    </source>
</evidence>
<evidence type="ECO:0000255" key="2">
    <source>
        <dbReference type="PROSITE-ProRule" id="PRU01266"/>
    </source>
</evidence>
<protein>
    <recommendedName>
        <fullName evidence="1">Probable dual-specificity RNA methyltransferase RlmN</fullName>
        <ecNumber evidence="1">2.1.1.192</ecNumber>
    </recommendedName>
    <alternativeName>
        <fullName evidence="1">23S rRNA (adenine(2503)-C(2))-methyltransferase</fullName>
    </alternativeName>
    <alternativeName>
        <fullName evidence="1">23S rRNA m2A2503 methyltransferase</fullName>
    </alternativeName>
    <alternativeName>
        <fullName evidence="1">Ribosomal RNA large subunit methyltransferase N</fullName>
    </alternativeName>
    <alternativeName>
        <fullName evidence="1">tRNA (adenine(37)-C(2))-methyltransferase</fullName>
    </alternativeName>
    <alternativeName>
        <fullName evidence="1">tRNA m2A37 methyltransferase</fullName>
    </alternativeName>
</protein>
<keyword id="KW-0004">4Fe-4S</keyword>
<keyword id="KW-0963">Cytoplasm</keyword>
<keyword id="KW-1015">Disulfide bond</keyword>
<keyword id="KW-0408">Iron</keyword>
<keyword id="KW-0411">Iron-sulfur</keyword>
<keyword id="KW-0479">Metal-binding</keyword>
<keyword id="KW-0489">Methyltransferase</keyword>
<keyword id="KW-0698">rRNA processing</keyword>
<keyword id="KW-0949">S-adenosyl-L-methionine</keyword>
<keyword id="KW-0808">Transferase</keyword>
<keyword id="KW-0819">tRNA processing</keyword>
<comment type="function">
    <text evidence="1">Specifically methylates position 2 of adenine 2503 in 23S rRNA and position 2 of adenine 37 in tRNAs.</text>
</comment>
<comment type="catalytic activity">
    <reaction evidence="1">
        <text>adenosine(2503) in 23S rRNA + 2 reduced [2Fe-2S]-[ferredoxin] + 2 S-adenosyl-L-methionine = 2-methyladenosine(2503) in 23S rRNA + 5'-deoxyadenosine + L-methionine + 2 oxidized [2Fe-2S]-[ferredoxin] + S-adenosyl-L-homocysteine</text>
        <dbReference type="Rhea" id="RHEA:42916"/>
        <dbReference type="Rhea" id="RHEA-COMP:10000"/>
        <dbReference type="Rhea" id="RHEA-COMP:10001"/>
        <dbReference type="Rhea" id="RHEA-COMP:10152"/>
        <dbReference type="Rhea" id="RHEA-COMP:10282"/>
        <dbReference type="ChEBI" id="CHEBI:17319"/>
        <dbReference type="ChEBI" id="CHEBI:33737"/>
        <dbReference type="ChEBI" id="CHEBI:33738"/>
        <dbReference type="ChEBI" id="CHEBI:57844"/>
        <dbReference type="ChEBI" id="CHEBI:57856"/>
        <dbReference type="ChEBI" id="CHEBI:59789"/>
        <dbReference type="ChEBI" id="CHEBI:74411"/>
        <dbReference type="ChEBI" id="CHEBI:74497"/>
        <dbReference type="EC" id="2.1.1.192"/>
    </reaction>
</comment>
<comment type="catalytic activity">
    <reaction evidence="1">
        <text>adenosine(37) in tRNA + 2 reduced [2Fe-2S]-[ferredoxin] + 2 S-adenosyl-L-methionine = 2-methyladenosine(37) in tRNA + 5'-deoxyadenosine + L-methionine + 2 oxidized [2Fe-2S]-[ferredoxin] + S-adenosyl-L-homocysteine</text>
        <dbReference type="Rhea" id="RHEA:43332"/>
        <dbReference type="Rhea" id="RHEA-COMP:10000"/>
        <dbReference type="Rhea" id="RHEA-COMP:10001"/>
        <dbReference type="Rhea" id="RHEA-COMP:10162"/>
        <dbReference type="Rhea" id="RHEA-COMP:10485"/>
        <dbReference type="ChEBI" id="CHEBI:17319"/>
        <dbReference type="ChEBI" id="CHEBI:33737"/>
        <dbReference type="ChEBI" id="CHEBI:33738"/>
        <dbReference type="ChEBI" id="CHEBI:57844"/>
        <dbReference type="ChEBI" id="CHEBI:57856"/>
        <dbReference type="ChEBI" id="CHEBI:59789"/>
        <dbReference type="ChEBI" id="CHEBI:74411"/>
        <dbReference type="ChEBI" id="CHEBI:74497"/>
        <dbReference type="EC" id="2.1.1.192"/>
    </reaction>
</comment>
<comment type="cofactor">
    <cofactor evidence="1">
        <name>[4Fe-4S] cluster</name>
        <dbReference type="ChEBI" id="CHEBI:49883"/>
    </cofactor>
    <text evidence="1">Binds 1 [4Fe-4S] cluster. The cluster is coordinated with 3 cysteines and an exchangeable S-adenosyl-L-methionine.</text>
</comment>
<comment type="subcellular location">
    <subcellularLocation>
        <location evidence="1">Cytoplasm</location>
    </subcellularLocation>
</comment>
<comment type="miscellaneous">
    <text evidence="1">Reaction proceeds by a ping-pong mechanism involving intermediate methylation of a conserved cysteine residue.</text>
</comment>
<comment type="similarity">
    <text evidence="1">Belongs to the radical SAM superfamily. RlmN family.</text>
</comment>